<gene>
    <name type="primary">frdB</name>
    <name type="ordered locus">WS0830</name>
</gene>
<keyword id="KW-0001">2Fe-2S</keyword>
<keyword id="KW-0002">3D-structure</keyword>
<keyword id="KW-0003">3Fe-4S</keyword>
<keyword id="KW-0004">4Fe-4S</keyword>
<keyword id="KW-0997">Cell inner membrane</keyword>
<keyword id="KW-1003">Cell membrane</keyword>
<keyword id="KW-0249">Electron transport</keyword>
<keyword id="KW-0408">Iron</keyword>
<keyword id="KW-0411">Iron-sulfur</keyword>
<keyword id="KW-0472">Membrane</keyword>
<keyword id="KW-0479">Metal-binding</keyword>
<keyword id="KW-0560">Oxidoreductase</keyword>
<keyword id="KW-1185">Reference proteome</keyword>
<keyword id="KW-0679">Respiratory chain</keyword>
<keyword id="KW-0813">Transport</keyword>
<keyword id="KW-0816">Tricarboxylic acid cycle</keyword>
<protein>
    <recommendedName>
        <fullName>Fumarate reductase iron-sulfur subunit</fullName>
        <ecNumber evidence="1">1.3.5.1</ecNumber>
    </recommendedName>
    <alternativeName>
        <fullName evidence="7">Quinol-fumarate reductase iron-sulfur subunit</fullName>
        <shortName evidence="7">QFR iron-sulfur subunit</shortName>
    </alternativeName>
</protein>
<sequence length="239" mass="27165">MGRMLTIRVFKYDPQSAVSKPHFQEYKIEEAPSMTIFIVLNMIRETYDPDLNFDFVCRAGICGSCGMMINGRPSLACRTLTKDFEDGVITLLPLPAFKLIKDLSVDTGNWFNGMSQRVESWIHAQKEHDISKLEERIEPEVAQEVFELDRCIECGCCIAACGTKIMREDFVGAAGLNRVVRFMIDPHDERTDEDYYELIGDDDGVFGCMTLLACHDVCPKNLPLQSKIAYLRRKMVSVN</sequence>
<name>FRDB_WOLSU</name>
<reference key="1">
    <citation type="journal article" date="1990" name="Arch. Microbiol.">
        <title>The fumarate reductase operon of Wolinella succinogenes. Sequence and expression of the frdA and frdB genes.</title>
        <authorList>
            <person name="Lauterbach F."/>
            <person name="Koertner C."/>
            <person name="Albracht S.P."/>
            <person name="Unden G."/>
            <person name="Kroeger A."/>
        </authorList>
    </citation>
    <scope>NUCLEOTIDE SEQUENCE [GENOMIC DNA]</scope>
</reference>
<reference key="2">
    <citation type="journal article" date="1998" name="Eur. J. Biochem.">
        <title>Deletion and site-directed mutagenesis of the Wolinella succinogenes fumarate reductase operon.</title>
        <authorList>
            <person name="Simon J."/>
            <person name="Gross R."/>
            <person name="Ringel M."/>
            <person name="Schmidt E."/>
            <person name="Kroeger A."/>
        </authorList>
    </citation>
    <scope>NUCLEOTIDE SEQUENCE [GENOMIC DNA]</scope>
    <scope>FUNCTION</scope>
</reference>
<reference key="3">
    <citation type="journal article" date="2003" name="Proc. Natl. Acad. Sci. U.S.A.">
        <title>Complete genome sequence and analysis of Wolinella succinogenes.</title>
        <authorList>
            <person name="Baar C."/>
            <person name="Eppinger M."/>
            <person name="Raddatz G."/>
            <person name="Simon J."/>
            <person name="Lanz C."/>
            <person name="Klimmek O."/>
            <person name="Nandakumar R."/>
            <person name="Gross R."/>
            <person name="Rosinus A."/>
            <person name="Keller H."/>
            <person name="Jagtap P."/>
            <person name="Linke B."/>
            <person name="Meyer F."/>
            <person name="Lederer H."/>
            <person name="Schuster S.C."/>
        </authorList>
    </citation>
    <scope>NUCLEOTIDE SEQUENCE [LARGE SCALE GENOMIC DNA]</scope>
    <source>
        <strain>ATCC 29543 / DSM 1740 / CCUG 13145 / JCM 31913 / LMG 7466 / NCTC 11488 / FDC 602W</strain>
    </source>
</reference>
<reference evidence="11" key="4">
    <citation type="journal article" date="1999" name="Nature">
        <title>Structure of fumarate reductase from Wolinella succinogenes at 2.2 A resolution.</title>
        <authorList>
            <person name="Lancaster C.R.D."/>
            <person name="Kroeger A."/>
            <person name="Auer M."/>
            <person name="Michel H."/>
        </authorList>
    </citation>
    <scope>X-RAY CRYSTALLOGRAPHY (2.2 ANGSTROMS) IN COMPLEX WITH IRON-SULFUR (2FE-2S); IRON-SULFUR (3FE-4S) AND IRON-SULFUR (4FE-4S)</scope>
    <scope>SUBUNIT</scope>
    <scope>SUBCELLULAR LOCATION</scope>
</reference>
<reference evidence="10" key="5">
    <citation type="journal article" date="2001" name="Eur. J. Biochem.">
        <title>A third crystal form of Wolinella succinogenes quinol:fumarate reductase reveals domain closure at the site of fumarate reduction.</title>
        <authorList>
            <person name="Lancaster C.R.D."/>
            <person name="Gross R."/>
            <person name="Simon J."/>
        </authorList>
    </citation>
    <scope>X-RAY CRYSTALLOGRAPHY (3.1 ANGSTROMS) IN COMPLEX WITH IRON-SULFUR (2FE-2S); IRON-SULFUR (3FE-4S) AND IRON-SULFUR (4FE-4S)</scope>
    <scope>FUNCTION</scope>
</reference>
<accession>P17596</accession>
<comment type="function">
    <text evidence="4 5 6">The fumarate reductase enzyme complex is required for fumarate respiration using formate or sulfide as electron donor.</text>
</comment>
<comment type="catalytic activity">
    <reaction evidence="1">
        <text>a menaquinone + succinate = a menaquinol + fumarate</text>
        <dbReference type="Rhea" id="RHEA:27834"/>
        <dbReference type="Rhea" id="RHEA-COMP:9537"/>
        <dbReference type="Rhea" id="RHEA-COMP:9539"/>
        <dbReference type="ChEBI" id="CHEBI:16374"/>
        <dbReference type="ChEBI" id="CHEBI:18151"/>
        <dbReference type="ChEBI" id="CHEBI:29806"/>
        <dbReference type="ChEBI" id="CHEBI:30031"/>
        <dbReference type="EC" id="1.3.5.1"/>
    </reaction>
</comment>
<comment type="cofactor">
    <cofactor evidence="4 5">
        <name>[2Fe-2S] cluster</name>
        <dbReference type="ChEBI" id="CHEBI:190135"/>
    </cofactor>
    <text evidence="4 5">Binds 1 [2Fe-2S] cluster.</text>
</comment>
<comment type="cofactor">
    <cofactor evidence="4 5">
        <name>[3Fe-4S] cluster</name>
        <dbReference type="ChEBI" id="CHEBI:21137"/>
    </cofactor>
    <text evidence="4 5">Binds 1 [3Fe-4S] cluster.</text>
</comment>
<comment type="cofactor">
    <cofactor evidence="4 5">
        <name>[4Fe-4S] cluster</name>
        <dbReference type="ChEBI" id="CHEBI:49883"/>
    </cofactor>
    <text evidence="4 5">Binds 1 [4Fe-4S] cluster.</text>
</comment>
<comment type="subunit">
    <text evidence="4">Part of an enzyme complex containing three subunits: a flavoprotein (frdA), an iron-sulfur protein (frdB), and diheme cytochrome b (frdC).</text>
</comment>
<comment type="subcellular location">
    <subcellularLocation>
        <location evidence="8">Cell inner membrane</location>
        <topology evidence="9">Peripheral membrane protein</topology>
        <orientation evidence="9">Cytoplasmic side</orientation>
    </subcellularLocation>
</comment>
<comment type="similarity">
    <text evidence="8">Belongs to the succinate dehydrogenase/fumarate reductase iron-sulfur protein family.</text>
</comment>
<proteinExistence type="evidence at protein level"/>
<organism>
    <name type="scientific">Wolinella succinogenes (strain ATCC 29543 / DSM 1740 / CCUG 13145 / JCM 31913 / LMG 7466 / NCTC 11488 / FDC 602W)</name>
    <name type="common">Vibrio succinogenes</name>
    <dbReference type="NCBI Taxonomy" id="273121"/>
    <lineage>
        <taxon>Bacteria</taxon>
        <taxon>Pseudomonadati</taxon>
        <taxon>Campylobacterota</taxon>
        <taxon>Epsilonproteobacteria</taxon>
        <taxon>Campylobacterales</taxon>
        <taxon>Helicobacteraceae</taxon>
        <taxon>Wolinella</taxon>
    </lineage>
</organism>
<feature type="chain" id="PRO_0000158708" description="Fumarate reductase iron-sulfur subunit">
    <location>
        <begin position="1"/>
        <end position="239"/>
    </location>
</feature>
<feature type="domain" description="2Fe-2S ferredoxin-type" evidence="2">
    <location>
        <begin position="5"/>
        <end position="95"/>
    </location>
</feature>
<feature type="domain" description="4Fe-4S ferredoxin-type" evidence="3">
    <location>
        <begin position="142"/>
        <end position="171"/>
    </location>
</feature>
<feature type="binding site" evidence="4 5 10 11 12 13 14">
    <location>
        <position position="57"/>
    </location>
    <ligand>
        <name>[2Fe-2S] cluster</name>
        <dbReference type="ChEBI" id="CHEBI:190135"/>
    </ligand>
</feature>
<feature type="binding site" evidence="4 5 10 11 12 13 14">
    <location>
        <position position="62"/>
    </location>
    <ligand>
        <name>[2Fe-2S] cluster</name>
        <dbReference type="ChEBI" id="CHEBI:190135"/>
    </ligand>
</feature>
<feature type="binding site" evidence="4 5 10 11 12 13 14">
    <location>
        <position position="65"/>
    </location>
    <ligand>
        <name>[2Fe-2S] cluster</name>
        <dbReference type="ChEBI" id="CHEBI:190135"/>
    </ligand>
</feature>
<feature type="binding site" evidence="4 5 10 11 12 13 14">
    <location>
        <position position="77"/>
    </location>
    <ligand>
        <name>[2Fe-2S] cluster</name>
        <dbReference type="ChEBI" id="CHEBI:190135"/>
    </ligand>
</feature>
<feature type="binding site" evidence="4 5 10 11 12 13 14">
    <location>
        <position position="151"/>
    </location>
    <ligand>
        <name>[4Fe-4S] cluster</name>
        <dbReference type="ChEBI" id="CHEBI:49883"/>
    </ligand>
</feature>
<feature type="binding site" evidence="4 5 10 11 12 13 14">
    <location>
        <position position="154"/>
    </location>
    <ligand>
        <name>[4Fe-4S] cluster</name>
        <dbReference type="ChEBI" id="CHEBI:49883"/>
    </ligand>
</feature>
<feature type="binding site" evidence="4 5 10 11 12 13 14">
    <location>
        <position position="157"/>
    </location>
    <ligand>
        <name>[4Fe-4S] cluster</name>
        <dbReference type="ChEBI" id="CHEBI:49883"/>
    </ligand>
</feature>
<feature type="binding site" evidence="4 5 10 11 12 13 14">
    <location>
        <position position="161"/>
    </location>
    <ligand>
        <name>[3Fe-4S] cluster</name>
        <dbReference type="ChEBI" id="CHEBI:21137"/>
    </ligand>
</feature>
<feature type="binding site" evidence="4 5 10 11 12 13 14">
    <location>
        <position position="208"/>
    </location>
    <ligand>
        <name>[3Fe-4S] cluster</name>
        <dbReference type="ChEBI" id="CHEBI:21137"/>
    </ligand>
</feature>
<feature type="binding site" evidence="4 5 10 11 12 13 14">
    <location>
        <position position="214"/>
    </location>
    <ligand>
        <name>[3Fe-4S] cluster</name>
        <dbReference type="ChEBI" id="CHEBI:21137"/>
    </ligand>
</feature>
<feature type="binding site" evidence="4 5 10 11 12 13 14">
    <location>
        <position position="218"/>
    </location>
    <ligand>
        <name>[4Fe-4S] cluster</name>
        <dbReference type="ChEBI" id="CHEBI:49883"/>
    </ligand>
</feature>
<feature type="strand" evidence="16">
    <location>
        <begin position="4"/>
        <end position="11"/>
    </location>
</feature>
<feature type="strand" evidence="16">
    <location>
        <begin position="22"/>
        <end position="29"/>
    </location>
</feature>
<feature type="helix" evidence="16">
    <location>
        <begin position="36"/>
        <end position="46"/>
    </location>
</feature>
<feature type="strand" evidence="16">
    <location>
        <begin position="56"/>
        <end position="62"/>
    </location>
</feature>
<feature type="strand" evidence="16">
    <location>
        <begin position="66"/>
        <end position="69"/>
    </location>
</feature>
<feature type="strand" evidence="16">
    <location>
        <begin position="72"/>
        <end position="75"/>
    </location>
</feature>
<feature type="helix" evidence="16">
    <location>
        <begin position="76"/>
        <end position="78"/>
    </location>
</feature>
<feature type="helix" evidence="16">
    <location>
        <begin position="81"/>
        <end position="83"/>
    </location>
</feature>
<feature type="strand" evidence="16">
    <location>
        <begin position="87"/>
        <end position="92"/>
    </location>
</feature>
<feature type="strand" evidence="16">
    <location>
        <begin position="97"/>
        <end position="101"/>
    </location>
</feature>
<feature type="strand" evidence="16">
    <location>
        <begin position="104"/>
        <end position="106"/>
    </location>
</feature>
<feature type="helix" evidence="16">
    <location>
        <begin position="108"/>
        <end position="117"/>
    </location>
</feature>
<feature type="strand" evidence="15">
    <location>
        <begin position="130"/>
        <end position="132"/>
    </location>
</feature>
<feature type="helix" evidence="16">
    <location>
        <begin position="139"/>
        <end position="149"/>
    </location>
</feature>
<feature type="helix" evidence="16">
    <location>
        <begin position="156"/>
        <end position="159"/>
    </location>
</feature>
<feature type="helix" evidence="16">
    <location>
        <begin position="162"/>
        <end position="166"/>
    </location>
</feature>
<feature type="helix" evidence="16">
    <location>
        <begin position="172"/>
        <end position="183"/>
    </location>
</feature>
<feature type="helix" evidence="16">
    <location>
        <begin position="192"/>
        <end position="199"/>
    </location>
</feature>
<feature type="turn" evidence="16">
    <location>
        <begin position="202"/>
        <end position="204"/>
    </location>
</feature>
<feature type="helix" evidence="16">
    <location>
        <begin position="205"/>
        <end position="207"/>
    </location>
</feature>
<feature type="helix" evidence="16">
    <location>
        <begin position="213"/>
        <end position="217"/>
    </location>
</feature>
<feature type="helix" evidence="16">
    <location>
        <begin position="224"/>
        <end position="235"/>
    </location>
</feature>
<evidence type="ECO:0000250" key="1">
    <source>
        <dbReference type="UniProtKB" id="P0AC47"/>
    </source>
</evidence>
<evidence type="ECO:0000255" key="2">
    <source>
        <dbReference type="PROSITE-ProRule" id="PRU00465"/>
    </source>
</evidence>
<evidence type="ECO:0000255" key="3">
    <source>
        <dbReference type="PROSITE-ProRule" id="PRU00711"/>
    </source>
</evidence>
<evidence type="ECO:0000269" key="4">
    <source>
    </source>
</evidence>
<evidence type="ECO:0000269" key="5">
    <source>
    </source>
</evidence>
<evidence type="ECO:0000269" key="6">
    <source>
    </source>
</evidence>
<evidence type="ECO:0000303" key="7">
    <source>
    </source>
</evidence>
<evidence type="ECO:0000305" key="8"/>
<evidence type="ECO:0000305" key="9">
    <source>
    </source>
</evidence>
<evidence type="ECO:0007744" key="10">
    <source>
        <dbReference type="PDB" id="1E7P"/>
    </source>
</evidence>
<evidence type="ECO:0007744" key="11">
    <source>
        <dbReference type="PDB" id="1QLB"/>
    </source>
</evidence>
<evidence type="ECO:0007744" key="12">
    <source>
        <dbReference type="PDB" id="2BS2"/>
    </source>
</evidence>
<evidence type="ECO:0007744" key="13">
    <source>
        <dbReference type="PDB" id="2BS3"/>
    </source>
</evidence>
<evidence type="ECO:0007744" key="14">
    <source>
        <dbReference type="PDB" id="2BS4"/>
    </source>
</evidence>
<evidence type="ECO:0007829" key="15">
    <source>
        <dbReference type="PDB" id="1E7P"/>
    </source>
</evidence>
<evidence type="ECO:0007829" key="16">
    <source>
        <dbReference type="PDB" id="2BS2"/>
    </source>
</evidence>
<dbReference type="EC" id="1.3.5.1" evidence="1"/>
<dbReference type="EMBL" id="AJ000662">
    <property type="protein sequence ID" value="CAA04215.1"/>
    <property type="molecule type" value="Genomic_DNA"/>
</dbReference>
<dbReference type="EMBL" id="BX571659">
    <property type="protein sequence ID" value="CAE09941.1"/>
    <property type="molecule type" value="Genomic_DNA"/>
</dbReference>
<dbReference type="PIR" id="C44954">
    <property type="entry name" value="C44954"/>
</dbReference>
<dbReference type="RefSeq" id="WP_011138738.1">
    <property type="nucleotide sequence ID" value="NC_005090.1"/>
</dbReference>
<dbReference type="PDB" id="1E7P">
    <property type="method" value="X-ray"/>
    <property type="resolution" value="3.10 A"/>
    <property type="chains" value="B/E/H/K=1-239"/>
</dbReference>
<dbReference type="PDB" id="1QLB">
    <property type="method" value="X-ray"/>
    <property type="resolution" value="2.33 A"/>
    <property type="chains" value="B/E=1-239"/>
</dbReference>
<dbReference type="PDB" id="2BS2">
    <property type="method" value="X-ray"/>
    <property type="resolution" value="1.78 A"/>
    <property type="chains" value="B/E=1-239"/>
</dbReference>
<dbReference type="PDB" id="2BS3">
    <property type="method" value="X-ray"/>
    <property type="resolution" value="2.19 A"/>
    <property type="chains" value="B/E=1-239"/>
</dbReference>
<dbReference type="PDB" id="2BS4">
    <property type="method" value="X-ray"/>
    <property type="resolution" value="2.76 A"/>
    <property type="chains" value="B/E=1-239"/>
</dbReference>
<dbReference type="PDBsum" id="1E7P"/>
<dbReference type="PDBsum" id="1QLB"/>
<dbReference type="PDBsum" id="2BS2"/>
<dbReference type="PDBsum" id="2BS3"/>
<dbReference type="PDBsum" id="2BS4"/>
<dbReference type="SMR" id="P17596"/>
<dbReference type="STRING" id="273121.WS0830"/>
<dbReference type="DrugBank" id="DB07669">
    <property type="generic name" value="2,3-Dimethyl-1,4-naphthoquinone"/>
</dbReference>
<dbReference type="TCDB" id="3.D.10.1.3">
    <property type="family name" value="the prokaryotic succinate dehydrogenase (sdh) family"/>
</dbReference>
<dbReference type="KEGG" id="wsu:WS0830"/>
<dbReference type="eggNOG" id="COG0479">
    <property type="taxonomic scope" value="Bacteria"/>
</dbReference>
<dbReference type="HOGENOM" id="CLU_044838_3_3_7"/>
<dbReference type="BRENDA" id="1.3.5.4">
    <property type="organism ID" value="6642"/>
</dbReference>
<dbReference type="EvolutionaryTrace" id="P17596"/>
<dbReference type="Proteomes" id="UP000000422">
    <property type="component" value="Chromosome"/>
</dbReference>
<dbReference type="GO" id="GO:0005886">
    <property type="term" value="C:plasma membrane"/>
    <property type="evidence" value="ECO:0007669"/>
    <property type="project" value="UniProtKB-SubCell"/>
</dbReference>
<dbReference type="GO" id="GO:0051537">
    <property type="term" value="F:2 iron, 2 sulfur cluster binding"/>
    <property type="evidence" value="ECO:0007669"/>
    <property type="project" value="UniProtKB-KW"/>
</dbReference>
<dbReference type="GO" id="GO:0051538">
    <property type="term" value="F:3 iron, 4 sulfur cluster binding"/>
    <property type="evidence" value="ECO:0007669"/>
    <property type="project" value="UniProtKB-KW"/>
</dbReference>
<dbReference type="GO" id="GO:0051539">
    <property type="term" value="F:4 iron, 4 sulfur cluster binding"/>
    <property type="evidence" value="ECO:0007669"/>
    <property type="project" value="UniProtKB-KW"/>
</dbReference>
<dbReference type="GO" id="GO:0009055">
    <property type="term" value="F:electron transfer activity"/>
    <property type="evidence" value="ECO:0007669"/>
    <property type="project" value="InterPro"/>
</dbReference>
<dbReference type="GO" id="GO:0046872">
    <property type="term" value="F:metal ion binding"/>
    <property type="evidence" value="ECO:0007669"/>
    <property type="project" value="UniProtKB-KW"/>
</dbReference>
<dbReference type="GO" id="GO:0016491">
    <property type="term" value="F:oxidoreductase activity"/>
    <property type="evidence" value="ECO:0007669"/>
    <property type="project" value="UniProtKB-KW"/>
</dbReference>
<dbReference type="GO" id="GO:0022904">
    <property type="term" value="P:respiratory electron transport chain"/>
    <property type="evidence" value="ECO:0007669"/>
    <property type="project" value="TreeGrafter"/>
</dbReference>
<dbReference type="GO" id="GO:0006099">
    <property type="term" value="P:tricarboxylic acid cycle"/>
    <property type="evidence" value="ECO:0007669"/>
    <property type="project" value="UniProtKB-KW"/>
</dbReference>
<dbReference type="FunFam" id="1.10.1060.10:FF:000003">
    <property type="entry name" value="Succinate dehydrogenase iron-sulfur subunit"/>
    <property type="match status" value="1"/>
</dbReference>
<dbReference type="Gene3D" id="3.10.20.30">
    <property type="match status" value="1"/>
</dbReference>
<dbReference type="Gene3D" id="1.10.1060.10">
    <property type="entry name" value="Alpha-helical ferredoxin"/>
    <property type="match status" value="1"/>
</dbReference>
<dbReference type="InterPro" id="IPR036010">
    <property type="entry name" value="2Fe-2S_ferredoxin-like_sf"/>
</dbReference>
<dbReference type="InterPro" id="IPR001041">
    <property type="entry name" value="2Fe-2S_ferredoxin-type"/>
</dbReference>
<dbReference type="InterPro" id="IPR006058">
    <property type="entry name" value="2Fe2S_fd_BS"/>
</dbReference>
<dbReference type="InterPro" id="IPR017896">
    <property type="entry name" value="4Fe4S_Fe-S-bd"/>
</dbReference>
<dbReference type="InterPro" id="IPR017900">
    <property type="entry name" value="4Fe4S_Fe_S_CS"/>
</dbReference>
<dbReference type="InterPro" id="IPR012675">
    <property type="entry name" value="Beta-grasp_dom_sf"/>
</dbReference>
<dbReference type="InterPro" id="IPR009051">
    <property type="entry name" value="Helical_ferredxn"/>
</dbReference>
<dbReference type="InterPro" id="IPR050573">
    <property type="entry name" value="SDH/FRD_Iron-Sulfur"/>
</dbReference>
<dbReference type="InterPro" id="IPR004489">
    <property type="entry name" value="Succ_DH/fum_Rdtase_Fe-S"/>
</dbReference>
<dbReference type="InterPro" id="IPR025192">
    <property type="entry name" value="Succ_DH/fum_Rdtase_N"/>
</dbReference>
<dbReference type="NCBIfam" id="TIGR00384">
    <property type="entry name" value="dhsB"/>
    <property type="match status" value="1"/>
</dbReference>
<dbReference type="NCBIfam" id="NF010071">
    <property type="entry name" value="PRK13552.1"/>
    <property type="match status" value="1"/>
</dbReference>
<dbReference type="PANTHER" id="PTHR11921:SF36">
    <property type="entry name" value="FUMARATE REDUCTASE IRON-SULFUR SUBUNIT"/>
    <property type="match status" value="1"/>
</dbReference>
<dbReference type="PANTHER" id="PTHR11921">
    <property type="entry name" value="SUCCINATE DEHYDROGENASE IRON-SULFUR PROTEIN"/>
    <property type="match status" value="1"/>
</dbReference>
<dbReference type="Pfam" id="PF13085">
    <property type="entry name" value="Fer2_3"/>
    <property type="match status" value="1"/>
</dbReference>
<dbReference type="Pfam" id="PF13183">
    <property type="entry name" value="Fer4_8"/>
    <property type="match status" value="1"/>
</dbReference>
<dbReference type="SUPFAM" id="SSF54292">
    <property type="entry name" value="2Fe-2S ferredoxin-like"/>
    <property type="match status" value="1"/>
</dbReference>
<dbReference type="SUPFAM" id="SSF46548">
    <property type="entry name" value="alpha-helical ferredoxin"/>
    <property type="match status" value="1"/>
</dbReference>
<dbReference type="PROSITE" id="PS00197">
    <property type="entry name" value="2FE2S_FER_1"/>
    <property type="match status" value="1"/>
</dbReference>
<dbReference type="PROSITE" id="PS51085">
    <property type="entry name" value="2FE2S_FER_2"/>
    <property type="match status" value="1"/>
</dbReference>
<dbReference type="PROSITE" id="PS00198">
    <property type="entry name" value="4FE4S_FER_1"/>
    <property type="match status" value="1"/>
</dbReference>
<dbReference type="PROSITE" id="PS51379">
    <property type="entry name" value="4FE4S_FER_2"/>
    <property type="match status" value="1"/>
</dbReference>